<gene>
    <name type="primary">URA3</name>
    <name type="ordered locus">YALI0E26741g</name>
</gene>
<keyword id="KW-0210">Decarboxylase</keyword>
<keyword id="KW-0456">Lyase</keyword>
<keyword id="KW-0665">Pyrimidine biosynthesis</keyword>
<keyword id="KW-1185">Reference proteome</keyword>
<accession>Q12724</accession>
<accession>Q6C4H6</accession>
<accession>Q9C1U4</accession>
<sequence length="286" mass="31630">MPSYEARANVHKSAFAARVLKLVAAKKTNLCASLDVTTTKELIELADKVGPYVCMIKTHIDIIDDFTYAGTVLPLKELALKHGFFLFEDRKFADIGNTVKHQYKNGVYRIAEWSDITNAHGVPGTGIIAGLRAGAEETVSEQKKEDVSDYENSQYKEFLVPSPNEKLARGLLMLAELSCKGSLATGEYSKQTIELARSDPEFVVGFIAQNRPKGDSEDWLILTPGVGLDDKGDALGQQYRTVEDVMSTGTDIIIVGRGLYGQNRDPIEEAKRYQKAGWEAYQKINC</sequence>
<evidence type="ECO:0000250" key="1"/>
<evidence type="ECO:0000255" key="2">
    <source>
        <dbReference type="PROSITE-ProRule" id="PRU10110"/>
    </source>
</evidence>
<evidence type="ECO:0000305" key="3"/>
<feature type="chain" id="PRO_0000134691" description="Orotidine 5'-phosphate decarboxylase">
    <location>
        <begin position="1"/>
        <end position="286"/>
    </location>
</feature>
<feature type="active site" description="Proton donor" evidence="2">
    <location>
        <position position="91"/>
    </location>
</feature>
<feature type="binding site" evidence="1">
    <location>
        <position position="35"/>
    </location>
    <ligand>
        <name>substrate</name>
    </ligand>
</feature>
<feature type="binding site" evidence="1">
    <location>
        <begin position="57"/>
        <end position="59"/>
    </location>
    <ligand>
        <name>substrate</name>
    </ligand>
</feature>
<feature type="binding site" evidence="1">
    <location>
        <begin position="89"/>
        <end position="98"/>
    </location>
    <ligand>
        <name>substrate</name>
    </ligand>
</feature>
<feature type="binding site" evidence="1">
    <location>
        <position position="239"/>
    </location>
    <ligand>
        <name>substrate</name>
    </ligand>
</feature>
<feature type="binding site" evidence="1">
    <location>
        <position position="257"/>
    </location>
    <ligand>
        <name>substrate</name>
    </ligand>
</feature>
<feature type="sequence conflict" description="In Ref. 1; CAC32856." evidence="3" ref="1">
    <original>KNGVY</original>
    <variation>RCH</variation>
    <location>
        <begin position="104"/>
        <end position="108"/>
    </location>
</feature>
<organism>
    <name type="scientific">Yarrowia lipolytica (strain CLIB 122 / E 150)</name>
    <name type="common">Yeast</name>
    <name type="synonym">Candida lipolytica</name>
    <dbReference type="NCBI Taxonomy" id="284591"/>
    <lineage>
        <taxon>Eukaryota</taxon>
        <taxon>Fungi</taxon>
        <taxon>Dikarya</taxon>
        <taxon>Ascomycota</taxon>
        <taxon>Saccharomycotina</taxon>
        <taxon>Dipodascomycetes</taxon>
        <taxon>Dipodascales</taxon>
        <taxon>Dipodascales incertae sedis</taxon>
        <taxon>Yarrowia</taxon>
    </lineage>
</organism>
<protein>
    <recommendedName>
        <fullName>Orotidine 5'-phosphate decarboxylase</fullName>
        <ecNumber>4.1.1.23</ecNumber>
    </recommendedName>
    <alternativeName>
        <fullName>OMP decarboxylase</fullName>
        <shortName>OMPDCase</shortName>
        <shortName>OMPdecase</shortName>
    </alternativeName>
    <alternativeName>
        <fullName>Uridine 5'-monophosphate synthase</fullName>
        <shortName>UMP synthase</shortName>
    </alternativeName>
</protein>
<comment type="catalytic activity">
    <reaction evidence="2">
        <text>orotidine 5'-phosphate + H(+) = UMP + CO2</text>
        <dbReference type="Rhea" id="RHEA:11596"/>
        <dbReference type="ChEBI" id="CHEBI:15378"/>
        <dbReference type="ChEBI" id="CHEBI:16526"/>
        <dbReference type="ChEBI" id="CHEBI:57538"/>
        <dbReference type="ChEBI" id="CHEBI:57865"/>
        <dbReference type="EC" id="4.1.1.23"/>
    </reaction>
</comment>
<comment type="pathway">
    <text>Pyrimidine metabolism; UMP biosynthesis via de novo pathway; UMP from orotate: step 2/2.</text>
</comment>
<comment type="similarity">
    <text evidence="3">Belongs to the OMP decarboxylase family.</text>
</comment>
<comment type="caution">
    <text evidence="3">Strain CLIB 122 / E 150 has a defective URA3 sequence (ura3-302) which is disrupted (positions 8 to 249) by S.cerevisiae SUC2.</text>
</comment>
<dbReference type="EC" id="4.1.1.23"/>
<dbReference type="EMBL" id="AJ306421">
    <property type="protein sequence ID" value="CAC32856.1"/>
    <property type="molecule type" value="Genomic_DNA"/>
</dbReference>
<dbReference type="EMBL" id="U40564">
    <property type="protein sequence ID" value="AAA85392.1"/>
    <property type="molecule type" value="Genomic_DNA"/>
</dbReference>
<dbReference type="EMBL" id="CR382131">
    <property type="status" value="NOT_ANNOTATED_CDS"/>
    <property type="molecule type" value="Genomic_DNA"/>
</dbReference>
<dbReference type="SMR" id="Q12724"/>
<dbReference type="FunCoup" id="Q12724">
    <property type="interactions" value="1135"/>
</dbReference>
<dbReference type="STRING" id="284591.Q12724"/>
<dbReference type="InParanoid" id="Q12724"/>
<dbReference type="UniPathway" id="UPA00070">
    <property type="reaction ID" value="UER00120"/>
</dbReference>
<dbReference type="Proteomes" id="UP000001300">
    <property type="component" value="Chromosome E"/>
</dbReference>
<dbReference type="GO" id="GO:0005829">
    <property type="term" value="C:cytosol"/>
    <property type="evidence" value="ECO:0000318"/>
    <property type="project" value="GO_Central"/>
</dbReference>
<dbReference type="GO" id="GO:0004590">
    <property type="term" value="F:orotidine-5'-phosphate decarboxylase activity"/>
    <property type="evidence" value="ECO:0000318"/>
    <property type="project" value="GO_Central"/>
</dbReference>
<dbReference type="GO" id="GO:0006207">
    <property type="term" value="P:'de novo' pyrimidine nucleobase biosynthetic process"/>
    <property type="evidence" value="ECO:0000318"/>
    <property type="project" value="GO_Central"/>
</dbReference>
<dbReference type="GO" id="GO:0044205">
    <property type="term" value="P:'de novo' UMP biosynthetic process"/>
    <property type="evidence" value="ECO:0007669"/>
    <property type="project" value="UniProtKB-UniPathway"/>
</dbReference>
<dbReference type="CDD" id="cd04725">
    <property type="entry name" value="OMP_decarboxylase_like"/>
    <property type="match status" value="1"/>
</dbReference>
<dbReference type="FunFam" id="3.20.20.70:FF:000114">
    <property type="entry name" value="Decarboxylase,orotidine phosphate"/>
    <property type="match status" value="1"/>
</dbReference>
<dbReference type="Gene3D" id="3.20.20.70">
    <property type="entry name" value="Aldolase class I"/>
    <property type="match status" value="1"/>
</dbReference>
<dbReference type="InterPro" id="IPR013785">
    <property type="entry name" value="Aldolase_TIM"/>
</dbReference>
<dbReference type="InterPro" id="IPR014732">
    <property type="entry name" value="OMPdecase"/>
</dbReference>
<dbReference type="InterPro" id="IPR018089">
    <property type="entry name" value="OMPdecase_AS"/>
</dbReference>
<dbReference type="InterPro" id="IPR001754">
    <property type="entry name" value="OMPdeCOase_dom"/>
</dbReference>
<dbReference type="InterPro" id="IPR011060">
    <property type="entry name" value="RibuloseP-bd_barrel"/>
</dbReference>
<dbReference type="NCBIfam" id="TIGR01740">
    <property type="entry name" value="pyrF"/>
    <property type="match status" value="2"/>
</dbReference>
<dbReference type="PANTHER" id="PTHR32119">
    <property type="entry name" value="OROTIDINE 5'-PHOSPHATE DECARBOXYLASE"/>
    <property type="match status" value="1"/>
</dbReference>
<dbReference type="PANTHER" id="PTHR32119:SF2">
    <property type="entry name" value="OROTIDINE 5'-PHOSPHATE DECARBOXYLASE"/>
    <property type="match status" value="1"/>
</dbReference>
<dbReference type="Pfam" id="PF00215">
    <property type="entry name" value="OMPdecase"/>
    <property type="match status" value="1"/>
</dbReference>
<dbReference type="SMART" id="SM00934">
    <property type="entry name" value="OMPdecase"/>
    <property type="match status" value="1"/>
</dbReference>
<dbReference type="SUPFAM" id="SSF51366">
    <property type="entry name" value="Ribulose-phoshate binding barrel"/>
    <property type="match status" value="1"/>
</dbReference>
<dbReference type="PROSITE" id="PS00156">
    <property type="entry name" value="OMPDECASE"/>
    <property type="match status" value="1"/>
</dbReference>
<name>PYRF_YARLI</name>
<proteinExistence type="inferred from homology"/>
<reference key="1">
    <citation type="journal article" date="2001" name="J. Bacteriol.">
        <title>Insertional mutagenesis in the n-alkane-assimilating yeast Yarrowia lipolytica: generation of tagged mutations in genes involved in hydrophobic substrate utilization.</title>
        <authorList>
            <person name="Mauersberger S."/>
            <person name="Wang H."/>
            <person name="Gaillardin C."/>
            <person name="Barth G."/>
            <person name="Nicaud J.-M."/>
        </authorList>
    </citation>
    <scope>NUCLEOTIDE SEQUENCE [GENOMIC DNA]</scope>
    <source>
        <strain>ATCC 20460 / W29 / CBS 7504 / IFP29</strain>
    </source>
</reference>
<reference key="2">
    <citation type="submission" date="1995-11" db="EMBL/GenBank/DDBJ databases">
        <authorList>
            <person name="Strick C.A."/>
            <person name="James L.C."/>
            <person name="O'Donnell M.M."/>
            <person name="Elsenboss L.A."/>
        </authorList>
    </citation>
    <scope>NUCLEOTIDE SEQUENCE [GENOMIC DNA]</scope>
</reference>
<reference key="3">
    <citation type="journal article" date="2004" name="Nature">
        <title>Genome evolution in yeasts.</title>
        <authorList>
            <person name="Dujon B."/>
            <person name="Sherman D."/>
            <person name="Fischer G."/>
            <person name="Durrens P."/>
            <person name="Casaregola S."/>
            <person name="Lafontaine I."/>
            <person name="de Montigny J."/>
            <person name="Marck C."/>
            <person name="Neuveglise C."/>
            <person name="Talla E."/>
            <person name="Goffard N."/>
            <person name="Frangeul L."/>
            <person name="Aigle M."/>
            <person name="Anthouard V."/>
            <person name="Babour A."/>
            <person name="Barbe V."/>
            <person name="Barnay S."/>
            <person name="Blanchin S."/>
            <person name="Beckerich J.-M."/>
            <person name="Beyne E."/>
            <person name="Bleykasten C."/>
            <person name="Boisrame A."/>
            <person name="Boyer J."/>
            <person name="Cattolico L."/>
            <person name="Confanioleri F."/>
            <person name="de Daruvar A."/>
            <person name="Despons L."/>
            <person name="Fabre E."/>
            <person name="Fairhead C."/>
            <person name="Ferry-Dumazet H."/>
            <person name="Groppi A."/>
            <person name="Hantraye F."/>
            <person name="Hennequin C."/>
            <person name="Jauniaux N."/>
            <person name="Joyet P."/>
            <person name="Kachouri R."/>
            <person name="Kerrest A."/>
            <person name="Koszul R."/>
            <person name="Lemaire M."/>
            <person name="Lesur I."/>
            <person name="Ma L."/>
            <person name="Muller H."/>
            <person name="Nicaud J.-M."/>
            <person name="Nikolski M."/>
            <person name="Oztas S."/>
            <person name="Ozier-Kalogeropoulos O."/>
            <person name="Pellenz S."/>
            <person name="Potier S."/>
            <person name="Richard G.-F."/>
            <person name="Straub M.-L."/>
            <person name="Suleau A."/>
            <person name="Swennen D."/>
            <person name="Tekaia F."/>
            <person name="Wesolowski-Louvel M."/>
            <person name="Westhof E."/>
            <person name="Wirth B."/>
            <person name="Zeniou-Meyer M."/>
            <person name="Zivanovic Y."/>
            <person name="Bolotin-Fukuhara M."/>
            <person name="Thierry A."/>
            <person name="Bouchier C."/>
            <person name="Caudron B."/>
            <person name="Scarpelli C."/>
            <person name="Gaillardin C."/>
            <person name="Weissenbach J."/>
            <person name="Wincker P."/>
            <person name="Souciet J.-L."/>
        </authorList>
    </citation>
    <scope>NUCLEOTIDE SEQUENCE [LARGE SCALE GENOMIC DNA] OF 1-7 AND 250-284</scope>
    <source>
        <strain>CLIB 122 / E 150</strain>
    </source>
</reference>